<dbReference type="EMBL" id="AP009240">
    <property type="protein sequence ID" value="BAG77979.1"/>
    <property type="molecule type" value="Genomic_DNA"/>
</dbReference>
<dbReference type="RefSeq" id="WP_000050789.1">
    <property type="nucleotide sequence ID" value="NC_011415.1"/>
</dbReference>
<dbReference type="SMR" id="B6I185"/>
<dbReference type="GeneID" id="75206440"/>
<dbReference type="KEGG" id="ecy:ECSE_2455"/>
<dbReference type="HOGENOM" id="CLU_063050_0_1_6"/>
<dbReference type="Proteomes" id="UP000008199">
    <property type="component" value="Chromosome"/>
</dbReference>
<dbReference type="GO" id="GO:0043590">
    <property type="term" value="C:bacterial nucleoid"/>
    <property type="evidence" value="ECO:0007669"/>
    <property type="project" value="TreeGrafter"/>
</dbReference>
<dbReference type="GO" id="GO:0005737">
    <property type="term" value="C:cytoplasm"/>
    <property type="evidence" value="ECO:0007669"/>
    <property type="project" value="UniProtKB-UniRule"/>
</dbReference>
<dbReference type="GO" id="GO:0003690">
    <property type="term" value="F:double-stranded DNA binding"/>
    <property type="evidence" value="ECO:0007669"/>
    <property type="project" value="TreeGrafter"/>
</dbReference>
<dbReference type="GO" id="GO:0003727">
    <property type="term" value="F:single-stranded RNA binding"/>
    <property type="evidence" value="ECO:0007669"/>
    <property type="project" value="TreeGrafter"/>
</dbReference>
<dbReference type="HAMAP" id="MF_00730">
    <property type="entry name" value="NdpA"/>
    <property type="match status" value="1"/>
</dbReference>
<dbReference type="InterPro" id="IPR007358">
    <property type="entry name" value="Nucleoid_associated_NdpA"/>
</dbReference>
<dbReference type="NCBIfam" id="NF001557">
    <property type="entry name" value="PRK00378.1"/>
    <property type="match status" value="1"/>
</dbReference>
<dbReference type="PANTHER" id="PTHR38772">
    <property type="match status" value="1"/>
</dbReference>
<dbReference type="PANTHER" id="PTHR38772:SF1">
    <property type="entry name" value="NUCLEOID-ASSOCIATED PROTEIN YEJK"/>
    <property type="match status" value="1"/>
</dbReference>
<dbReference type="Pfam" id="PF04245">
    <property type="entry name" value="NA37"/>
    <property type="match status" value="1"/>
</dbReference>
<proteinExistence type="inferred from homology"/>
<organism>
    <name type="scientific">Escherichia coli (strain SE11)</name>
    <dbReference type="NCBI Taxonomy" id="409438"/>
    <lineage>
        <taxon>Bacteria</taxon>
        <taxon>Pseudomonadati</taxon>
        <taxon>Pseudomonadota</taxon>
        <taxon>Gammaproteobacteria</taxon>
        <taxon>Enterobacterales</taxon>
        <taxon>Enterobacteriaceae</taxon>
        <taxon>Escherichia</taxon>
    </lineage>
</organism>
<feature type="chain" id="PRO_1000191555" description="Nucleoid-associated protein YejK">
    <location>
        <begin position="1"/>
        <end position="335"/>
    </location>
</feature>
<evidence type="ECO:0000255" key="1">
    <source>
        <dbReference type="HAMAP-Rule" id="MF_00730"/>
    </source>
</evidence>
<gene>
    <name evidence="1" type="primary">yejK</name>
    <name type="ordered locus">ECSE_2455</name>
</gene>
<name>NDPA_ECOSE</name>
<reference key="1">
    <citation type="journal article" date="2008" name="DNA Res.">
        <title>Complete genome sequence and comparative analysis of the wild-type commensal Escherichia coli strain SE11 isolated from a healthy adult.</title>
        <authorList>
            <person name="Oshima K."/>
            <person name="Toh H."/>
            <person name="Ogura Y."/>
            <person name="Sasamoto H."/>
            <person name="Morita H."/>
            <person name="Park S.-H."/>
            <person name="Ooka T."/>
            <person name="Iyoda S."/>
            <person name="Taylor T.D."/>
            <person name="Hayashi T."/>
            <person name="Itoh K."/>
            <person name="Hattori M."/>
        </authorList>
    </citation>
    <scope>NUCLEOTIDE SEQUENCE [LARGE SCALE GENOMIC DNA]</scope>
    <source>
        <strain>SE11</strain>
    </source>
</reference>
<accession>B6I185</accession>
<keyword id="KW-0963">Cytoplasm</keyword>
<comment type="subcellular location">
    <subcellularLocation>
        <location evidence="1">Cytoplasm</location>
        <location evidence="1">Nucleoid</location>
    </subcellularLocation>
</comment>
<comment type="similarity">
    <text evidence="1">Belongs to the YejK family.</text>
</comment>
<protein>
    <recommendedName>
        <fullName evidence="1">Nucleoid-associated protein YejK</fullName>
    </recommendedName>
</protein>
<sequence length="335" mass="37823">MSLDINQIALHQLIKRDEQNLELVLRDSLLEPTETVVEMVAELHRVYSAKNKAYGLFSEESELAQTLRLQRQGEEDFLAFSRAATGRLRDELAKYPFADGGFVLFCHYRYLAVEYLLVAVLSNLSSMRVNENLDINPTHYLDINHADIVARIDLTEWETNPESTRYLTFLKGRVGRKVADFFMDFLGASEGLNAKAQNRGLLQAVDDFTAEAQLDKAERQNVRQQVYSYCNEQLQAGEEIELESLSKELAGVSEVSFTEFAAEKGYELEESFPADRSTLRQLTKFAGSGGGLTINFDAMLLGERIFWDPATDTLTIKGTPPNLRDQLQRRTSGGN</sequence>